<proteinExistence type="predicted"/>
<feature type="chain" id="PRO_0000202302" description="Uncharacterized protein TP_0677">
    <location>
        <begin position="1"/>
        <end position="202"/>
    </location>
</feature>
<organism>
    <name type="scientific">Treponema pallidum (strain Nichols)</name>
    <dbReference type="NCBI Taxonomy" id="243276"/>
    <lineage>
        <taxon>Bacteria</taxon>
        <taxon>Pseudomonadati</taxon>
        <taxon>Spirochaetota</taxon>
        <taxon>Spirochaetia</taxon>
        <taxon>Spirochaetales</taxon>
        <taxon>Treponemataceae</taxon>
        <taxon>Treponema</taxon>
    </lineage>
</organism>
<name>Y677_TREPA</name>
<keyword id="KW-1185">Reference proteome</keyword>
<reference key="1">
    <citation type="journal article" date="1998" name="Science">
        <title>Complete genome sequence of Treponema pallidum, the syphilis spirochete.</title>
        <authorList>
            <person name="Fraser C.M."/>
            <person name="Norris S.J."/>
            <person name="Weinstock G.M."/>
            <person name="White O."/>
            <person name="Sutton G.G."/>
            <person name="Dodson R.J."/>
            <person name="Gwinn M.L."/>
            <person name="Hickey E.K."/>
            <person name="Clayton R.A."/>
            <person name="Ketchum K.A."/>
            <person name="Sodergren E."/>
            <person name="Hardham J.M."/>
            <person name="McLeod M.P."/>
            <person name="Salzberg S.L."/>
            <person name="Peterson J.D."/>
            <person name="Khalak H.G."/>
            <person name="Richardson D.L."/>
            <person name="Howell J.K."/>
            <person name="Chidambaram M."/>
            <person name="Utterback T.R."/>
            <person name="McDonald L.A."/>
            <person name="Artiach P."/>
            <person name="Bowman C."/>
            <person name="Cotton M.D."/>
            <person name="Fujii C."/>
            <person name="Garland S.A."/>
            <person name="Hatch B."/>
            <person name="Horst K."/>
            <person name="Roberts K.M."/>
            <person name="Sandusky M."/>
            <person name="Weidman J.F."/>
            <person name="Smith H.O."/>
            <person name="Venter J.C."/>
        </authorList>
    </citation>
    <scope>NUCLEOTIDE SEQUENCE [LARGE SCALE GENOMIC DNA]</scope>
    <source>
        <strain>Nichols</strain>
    </source>
</reference>
<protein>
    <recommendedName>
        <fullName>Uncharacterized protein TP_0677</fullName>
    </recommendedName>
</protein>
<sequence>MQYSGPMQEEVSERTCLVSDPSLSSVAGAGSGVVQAYVARQLARQVHACVDCGMRGIRRAVRRFAADVIAREAPELTAAKREALLDAWVPSPSSEHVAVGSQPAQACGGAPLPADVQYSMVLHFVWYGLGVLSEQERVQLEQAVPHWPQVYWSCFSPQLKRLIKACLTGLLDVEAFCAAVRTLLGIAGMDTAADASIHPHEK</sequence>
<accession>O83683</accession>
<gene>
    <name type="ordered locus">TP_0677</name>
</gene>
<dbReference type="EMBL" id="AE000520">
    <property type="protein sequence ID" value="AAC65653.1"/>
    <property type="molecule type" value="Genomic_DNA"/>
</dbReference>
<dbReference type="PIR" id="E71294">
    <property type="entry name" value="E71294"/>
</dbReference>
<dbReference type="RefSeq" id="WP_010882122.1">
    <property type="nucleotide sequence ID" value="NC_021490.2"/>
</dbReference>
<dbReference type="SMR" id="O83683"/>
<dbReference type="IntAct" id="O83683">
    <property type="interactions" value="2"/>
</dbReference>
<dbReference type="STRING" id="243276.TP_0677"/>
<dbReference type="EnsemblBacteria" id="AAC65653">
    <property type="protein sequence ID" value="AAC65653"/>
    <property type="gene ID" value="TP_0677"/>
</dbReference>
<dbReference type="KEGG" id="tpa:TP_0677"/>
<dbReference type="KEGG" id="tpw:TPANIC_0677"/>
<dbReference type="eggNOG" id="ENOG50348SD">
    <property type="taxonomic scope" value="Bacteria"/>
</dbReference>
<dbReference type="HOGENOM" id="CLU_1389676_0_0_12"/>
<dbReference type="OrthoDB" id="358678at2"/>
<dbReference type="Proteomes" id="UP000000811">
    <property type="component" value="Chromosome"/>
</dbReference>